<dbReference type="EMBL" id="CP000931">
    <property type="protein sequence ID" value="ABZ77527.1"/>
    <property type="molecule type" value="Genomic_DNA"/>
</dbReference>
<dbReference type="RefSeq" id="WP_012278054.1">
    <property type="nucleotide sequence ID" value="NC_010334.1"/>
</dbReference>
<dbReference type="SMR" id="B0TP80"/>
<dbReference type="STRING" id="458817.Shal_2978"/>
<dbReference type="KEGG" id="shl:Shal_2978"/>
<dbReference type="eggNOG" id="COG0233">
    <property type="taxonomic scope" value="Bacteria"/>
</dbReference>
<dbReference type="HOGENOM" id="CLU_073981_2_1_6"/>
<dbReference type="OrthoDB" id="9804006at2"/>
<dbReference type="Proteomes" id="UP000001317">
    <property type="component" value="Chromosome"/>
</dbReference>
<dbReference type="GO" id="GO:0005829">
    <property type="term" value="C:cytosol"/>
    <property type="evidence" value="ECO:0007669"/>
    <property type="project" value="GOC"/>
</dbReference>
<dbReference type="GO" id="GO:0043023">
    <property type="term" value="F:ribosomal large subunit binding"/>
    <property type="evidence" value="ECO:0007669"/>
    <property type="project" value="TreeGrafter"/>
</dbReference>
<dbReference type="GO" id="GO:0002184">
    <property type="term" value="P:cytoplasmic translational termination"/>
    <property type="evidence" value="ECO:0007669"/>
    <property type="project" value="TreeGrafter"/>
</dbReference>
<dbReference type="CDD" id="cd00520">
    <property type="entry name" value="RRF"/>
    <property type="match status" value="1"/>
</dbReference>
<dbReference type="FunFam" id="1.10.132.20:FF:000001">
    <property type="entry name" value="Ribosome-recycling factor"/>
    <property type="match status" value="1"/>
</dbReference>
<dbReference type="FunFam" id="3.30.1360.40:FF:000001">
    <property type="entry name" value="Ribosome-recycling factor"/>
    <property type="match status" value="1"/>
</dbReference>
<dbReference type="Gene3D" id="3.30.1360.40">
    <property type="match status" value="1"/>
</dbReference>
<dbReference type="Gene3D" id="1.10.132.20">
    <property type="entry name" value="Ribosome-recycling factor"/>
    <property type="match status" value="1"/>
</dbReference>
<dbReference type="HAMAP" id="MF_00040">
    <property type="entry name" value="RRF"/>
    <property type="match status" value="1"/>
</dbReference>
<dbReference type="InterPro" id="IPR002661">
    <property type="entry name" value="Ribosome_recyc_fac"/>
</dbReference>
<dbReference type="InterPro" id="IPR023584">
    <property type="entry name" value="Ribosome_recyc_fac_dom"/>
</dbReference>
<dbReference type="InterPro" id="IPR036191">
    <property type="entry name" value="RRF_sf"/>
</dbReference>
<dbReference type="NCBIfam" id="TIGR00496">
    <property type="entry name" value="frr"/>
    <property type="match status" value="1"/>
</dbReference>
<dbReference type="PANTHER" id="PTHR20982:SF3">
    <property type="entry name" value="MITOCHONDRIAL RIBOSOME RECYCLING FACTOR PSEUDO 1"/>
    <property type="match status" value="1"/>
</dbReference>
<dbReference type="PANTHER" id="PTHR20982">
    <property type="entry name" value="RIBOSOME RECYCLING FACTOR"/>
    <property type="match status" value="1"/>
</dbReference>
<dbReference type="Pfam" id="PF01765">
    <property type="entry name" value="RRF"/>
    <property type="match status" value="1"/>
</dbReference>
<dbReference type="SUPFAM" id="SSF55194">
    <property type="entry name" value="Ribosome recycling factor, RRF"/>
    <property type="match status" value="1"/>
</dbReference>
<keyword id="KW-0963">Cytoplasm</keyword>
<keyword id="KW-0648">Protein biosynthesis</keyword>
<reference key="1">
    <citation type="submission" date="2008-01" db="EMBL/GenBank/DDBJ databases">
        <title>Complete sequence of Shewanella halifaxensis HAW-EB4.</title>
        <authorList>
            <consortium name="US DOE Joint Genome Institute"/>
            <person name="Copeland A."/>
            <person name="Lucas S."/>
            <person name="Lapidus A."/>
            <person name="Glavina del Rio T."/>
            <person name="Dalin E."/>
            <person name="Tice H."/>
            <person name="Bruce D."/>
            <person name="Goodwin L."/>
            <person name="Pitluck S."/>
            <person name="Sims D."/>
            <person name="Brettin T."/>
            <person name="Detter J.C."/>
            <person name="Han C."/>
            <person name="Kuske C.R."/>
            <person name="Schmutz J."/>
            <person name="Larimer F."/>
            <person name="Land M."/>
            <person name="Hauser L."/>
            <person name="Kyrpides N."/>
            <person name="Kim E."/>
            <person name="Zhao J.-S."/>
            <person name="Richardson P."/>
        </authorList>
    </citation>
    <scope>NUCLEOTIDE SEQUENCE [LARGE SCALE GENOMIC DNA]</scope>
    <source>
        <strain>HAW-EB4</strain>
    </source>
</reference>
<name>RRF_SHEHH</name>
<evidence type="ECO:0000255" key="1">
    <source>
        <dbReference type="HAMAP-Rule" id="MF_00040"/>
    </source>
</evidence>
<feature type="chain" id="PRO_1000074601" description="Ribosome-recycling factor">
    <location>
        <begin position="1"/>
        <end position="185"/>
    </location>
</feature>
<gene>
    <name evidence="1" type="primary">frr</name>
    <name type="ordered locus">Shal_2978</name>
</gene>
<comment type="function">
    <text evidence="1">Responsible for the release of ribosomes from messenger RNA at the termination of protein biosynthesis. May increase the efficiency of translation by recycling ribosomes from one round of translation to another.</text>
</comment>
<comment type="subcellular location">
    <subcellularLocation>
        <location evidence="1">Cytoplasm</location>
    </subcellularLocation>
</comment>
<comment type="similarity">
    <text evidence="1">Belongs to the RRF family.</text>
</comment>
<sequence length="185" mass="20626">MINEIKSDAQTRMDKCVESTKTQMAKVRTGRAHPSLLDTIQVPYYGSLTPLKQVASVSIGDARTLTVSVFDRTMIAAVEKAIMSSDLGLNPMSAGATIRIPLPALTEERRKDLIKVVRAEAENGRIAIRNVRRDANSNVKELEKEKECTEDDVRRSEDDVQKLTDAHIKLVDDVLAAKEKELMEF</sequence>
<organism>
    <name type="scientific">Shewanella halifaxensis (strain HAW-EB4)</name>
    <dbReference type="NCBI Taxonomy" id="458817"/>
    <lineage>
        <taxon>Bacteria</taxon>
        <taxon>Pseudomonadati</taxon>
        <taxon>Pseudomonadota</taxon>
        <taxon>Gammaproteobacteria</taxon>
        <taxon>Alteromonadales</taxon>
        <taxon>Shewanellaceae</taxon>
        <taxon>Shewanella</taxon>
    </lineage>
</organism>
<protein>
    <recommendedName>
        <fullName evidence="1">Ribosome-recycling factor</fullName>
        <shortName evidence="1">RRF</shortName>
    </recommendedName>
    <alternativeName>
        <fullName evidence="1">Ribosome-releasing factor</fullName>
    </alternativeName>
</protein>
<proteinExistence type="inferred from homology"/>
<accession>B0TP80</accession>